<organism>
    <name type="scientific">Staphylococcus aureus (strain bovine RF122 / ET3-1)</name>
    <dbReference type="NCBI Taxonomy" id="273036"/>
    <lineage>
        <taxon>Bacteria</taxon>
        <taxon>Bacillati</taxon>
        <taxon>Bacillota</taxon>
        <taxon>Bacilli</taxon>
        <taxon>Bacillales</taxon>
        <taxon>Staphylococcaceae</taxon>
        <taxon>Staphylococcus</taxon>
    </lineage>
</organism>
<feature type="chain" id="PRO_1000068297" description="Peptide methionine sulfoxide reductase MsrB">
    <location>
        <begin position="1"/>
        <end position="142"/>
    </location>
</feature>
<feature type="domain" description="MsrB" evidence="2">
    <location>
        <begin position="2"/>
        <end position="125"/>
    </location>
</feature>
<feature type="active site" description="Nucleophile" evidence="2">
    <location>
        <position position="114"/>
    </location>
</feature>
<name>MSRB_STAAB</name>
<gene>
    <name evidence="1" type="primary">msrB</name>
    <name type="ordered locus">SAB1278c</name>
</gene>
<evidence type="ECO:0000255" key="1">
    <source>
        <dbReference type="HAMAP-Rule" id="MF_01400"/>
    </source>
</evidence>
<evidence type="ECO:0000255" key="2">
    <source>
        <dbReference type="PROSITE-ProRule" id="PRU01126"/>
    </source>
</evidence>
<comment type="catalytic activity">
    <reaction evidence="1">
        <text>L-methionyl-[protein] + [thioredoxin]-disulfide + H2O = L-methionyl-(R)-S-oxide-[protein] + [thioredoxin]-dithiol</text>
        <dbReference type="Rhea" id="RHEA:24164"/>
        <dbReference type="Rhea" id="RHEA-COMP:10698"/>
        <dbReference type="Rhea" id="RHEA-COMP:10700"/>
        <dbReference type="Rhea" id="RHEA-COMP:12313"/>
        <dbReference type="Rhea" id="RHEA-COMP:12314"/>
        <dbReference type="ChEBI" id="CHEBI:15377"/>
        <dbReference type="ChEBI" id="CHEBI:16044"/>
        <dbReference type="ChEBI" id="CHEBI:29950"/>
        <dbReference type="ChEBI" id="CHEBI:45764"/>
        <dbReference type="ChEBI" id="CHEBI:50058"/>
        <dbReference type="EC" id="1.8.4.12"/>
    </reaction>
</comment>
<comment type="similarity">
    <text evidence="1">Belongs to the MsrB Met sulfoxide reductase family.</text>
</comment>
<reference key="1">
    <citation type="journal article" date="2007" name="PLoS ONE">
        <title>Molecular correlates of host specialization in Staphylococcus aureus.</title>
        <authorList>
            <person name="Herron-Olson L."/>
            <person name="Fitzgerald J.R."/>
            <person name="Musser J.M."/>
            <person name="Kapur V."/>
        </authorList>
    </citation>
    <scope>NUCLEOTIDE SEQUENCE [LARGE SCALE GENOMIC DNA]</scope>
    <source>
        <strain>bovine RF122 / ET3-1</strain>
    </source>
</reference>
<accession>Q2YY44</accession>
<sequence>MLKKDKSELTDIEYIVTQENGTEPPFMNEYWNHFDKGVYVDKISGKPLFTSEEKFHSECGWPSFSKALDDDEIIELVDKSFGMLRTEVRSEESNSHLGHVFNDGPKESGGLRYCINSAAIQFIPYEKLEELGYGDLISHFDK</sequence>
<proteinExistence type="inferred from homology"/>
<keyword id="KW-0560">Oxidoreductase</keyword>
<protein>
    <recommendedName>
        <fullName evidence="1">Peptide methionine sulfoxide reductase MsrB</fullName>
        <ecNumber evidence="1">1.8.4.12</ecNumber>
    </recommendedName>
    <alternativeName>
        <fullName evidence="1">Peptide-methionine (R)-S-oxide reductase</fullName>
    </alternativeName>
</protein>
<dbReference type="EC" id="1.8.4.12" evidence="1"/>
<dbReference type="EMBL" id="AJ938182">
    <property type="protein sequence ID" value="CAI80967.1"/>
    <property type="molecule type" value="Genomic_DNA"/>
</dbReference>
<dbReference type="RefSeq" id="WP_000913321.1">
    <property type="nucleotide sequence ID" value="NC_007622.1"/>
</dbReference>
<dbReference type="SMR" id="Q2YY44"/>
<dbReference type="KEGG" id="sab:SAB1278c"/>
<dbReference type="HOGENOM" id="CLU_031040_8_5_9"/>
<dbReference type="GO" id="GO:0005737">
    <property type="term" value="C:cytoplasm"/>
    <property type="evidence" value="ECO:0007669"/>
    <property type="project" value="TreeGrafter"/>
</dbReference>
<dbReference type="GO" id="GO:0033743">
    <property type="term" value="F:peptide-methionine (R)-S-oxide reductase activity"/>
    <property type="evidence" value="ECO:0007669"/>
    <property type="project" value="UniProtKB-UniRule"/>
</dbReference>
<dbReference type="GO" id="GO:0030091">
    <property type="term" value="P:protein repair"/>
    <property type="evidence" value="ECO:0007669"/>
    <property type="project" value="InterPro"/>
</dbReference>
<dbReference type="GO" id="GO:0006979">
    <property type="term" value="P:response to oxidative stress"/>
    <property type="evidence" value="ECO:0007669"/>
    <property type="project" value="InterPro"/>
</dbReference>
<dbReference type="FunFam" id="2.170.150.20:FF:000003">
    <property type="entry name" value="Peptide methionine sulfoxide reductase MsrB"/>
    <property type="match status" value="1"/>
</dbReference>
<dbReference type="Gene3D" id="2.170.150.20">
    <property type="entry name" value="Peptide methionine sulfoxide reductase"/>
    <property type="match status" value="1"/>
</dbReference>
<dbReference type="HAMAP" id="MF_01400">
    <property type="entry name" value="MsrB"/>
    <property type="match status" value="1"/>
</dbReference>
<dbReference type="InterPro" id="IPR028427">
    <property type="entry name" value="Met_Sox_Rdtase_MsrB"/>
</dbReference>
<dbReference type="InterPro" id="IPR002579">
    <property type="entry name" value="Met_Sox_Rdtase_MsrB_dom"/>
</dbReference>
<dbReference type="InterPro" id="IPR011057">
    <property type="entry name" value="Mss4-like_sf"/>
</dbReference>
<dbReference type="NCBIfam" id="TIGR00357">
    <property type="entry name" value="peptide-methionine (R)-S-oxide reductase MsrB"/>
    <property type="match status" value="1"/>
</dbReference>
<dbReference type="PANTHER" id="PTHR10173">
    <property type="entry name" value="METHIONINE SULFOXIDE REDUCTASE"/>
    <property type="match status" value="1"/>
</dbReference>
<dbReference type="PANTHER" id="PTHR10173:SF59">
    <property type="entry name" value="PEPTIDE METHIONINE SULFOXIDE REDUCTASE MSRA_MSRB"/>
    <property type="match status" value="1"/>
</dbReference>
<dbReference type="Pfam" id="PF01641">
    <property type="entry name" value="SelR"/>
    <property type="match status" value="1"/>
</dbReference>
<dbReference type="SUPFAM" id="SSF51316">
    <property type="entry name" value="Mss4-like"/>
    <property type="match status" value="1"/>
</dbReference>
<dbReference type="PROSITE" id="PS51790">
    <property type="entry name" value="MSRB"/>
    <property type="match status" value="1"/>
</dbReference>